<keyword id="KW-0004">4Fe-4S</keyword>
<keyword id="KW-0028">Amino-acid biosynthesis</keyword>
<keyword id="KW-0198">Cysteine biosynthesis</keyword>
<keyword id="KW-0349">Heme</keyword>
<keyword id="KW-0408">Iron</keyword>
<keyword id="KW-0411">Iron-sulfur</keyword>
<keyword id="KW-0479">Metal-binding</keyword>
<keyword id="KW-0521">NADP</keyword>
<keyword id="KW-0560">Oxidoreductase</keyword>
<dbReference type="EC" id="1.8.1.2" evidence="1"/>
<dbReference type="EMBL" id="CP001127">
    <property type="protein sequence ID" value="ACF91464.1"/>
    <property type="molecule type" value="Genomic_DNA"/>
</dbReference>
<dbReference type="RefSeq" id="WP_001290664.1">
    <property type="nucleotide sequence ID" value="NC_011094.1"/>
</dbReference>
<dbReference type="SMR" id="B4TTX8"/>
<dbReference type="KEGG" id="sew:SeSA_A3101"/>
<dbReference type="HOGENOM" id="CLU_001975_3_2_6"/>
<dbReference type="UniPathway" id="UPA00140">
    <property type="reaction ID" value="UER00207"/>
</dbReference>
<dbReference type="Proteomes" id="UP000001865">
    <property type="component" value="Chromosome"/>
</dbReference>
<dbReference type="GO" id="GO:0009337">
    <property type="term" value="C:sulfite reductase complex (NADPH)"/>
    <property type="evidence" value="ECO:0007669"/>
    <property type="project" value="InterPro"/>
</dbReference>
<dbReference type="GO" id="GO:0051539">
    <property type="term" value="F:4 iron, 4 sulfur cluster binding"/>
    <property type="evidence" value="ECO:0007669"/>
    <property type="project" value="UniProtKB-KW"/>
</dbReference>
<dbReference type="GO" id="GO:0020037">
    <property type="term" value="F:heme binding"/>
    <property type="evidence" value="ECO:0007669"/>
    <property type="project" value="InterPro"/>
</dbReference>
<dbReference type="GO" id="GO:0046872">
    <property type="term" value="F:metal ion binding"/>
    <property type="evidence" value="ECO:0007669"/>
    <property type="project" value="UniProtKB-KW"/>
</dbReference>
<dbReference type="GO" id="GO:0050661">
    <property type="term" value="F:NADP binding"/>
    <property type="evidence" value="ECO:0007669"/>
    <property type="project" value="InterPro"/>
</dbReference>
<dbReference type="GO" id="GO:0050311">
    <property type="term" value="F:sulfite reductase (ferredoxin) activity"/>
    <property type="evidence" value="ECO:0007669"/>
    <property type="project" value="TreeGrafter"/>
</dbReference>
<dbReference type="GO" id="GO:0004783">
    <property type="term" value="F:sulfite reductase (NADPH) activity"/>
    <property type="evidence" value="ECO:0007669"/>
    <property type="project" value="UniProtKB-UniRule"/>
</dbReference>
<dbReference type="GO" id="GO:0019344">
    <property type="term" value="P:cysteine biosynthetic process"/>
    <property type="evidence" value="ECO:0007669"/>
    <property type="project" value="UniProtKB-KW"/>
</dbReference>
<dbReference type="GO" id="GO:0070814">
    <property type="term" value="P:hydrogen sulfide biosynthetic process"/>
    <property type="evidence" value="ECO:0007669"/>
    <property type="project" value="UniProtKB-UniRule"/>
</dbReference>
<dbReference type="GO" id="GO:0000103">
    <property type="term" value="P:sulfate assimilation"/>
    <property type="evidence" value="ECO:0007669"/>
    <property type="project" value="UniProtKB-UniRule"/>
</dbReference>
<dbReference type="FunFam" id="3.30.413.10:FF:000003">
    <property type="entry name" value="Sulfite reductase [NADPH] hemoprotein beta-component"/>
    <property type="match status" value="1"/>
</dbReference>
<dbReference type="FunFam" id="3.30.413.10:FF:000004">
    <property type="entry name" value="Sulfite reductase [NADPH] hemoprotein beta-component"/>
    <property type="match status" value="1"/>
</dbReference>
<dbReference type="Gene3D" id="3.30.413.10">
    <property type="entry name" value="Sulfite Reductase Hemoprotein, domain 1"/>
    <property type="match status" value="2"/>
</dbReference>
<dbReference type="HAMAP" id="MF_01540">
    <property type="entry name" value="CysI"/>
    <property type="match status" value="1"/>
</dbReference>
<dbReference type="InterPro" id="IPR011786">
    <property type="entry name" value="CysI"/>
</dbReference>
<dbReference type="InterPro" id="IPR005117">
    <property type="entry name" value="NiRdtase/SiRdtase_haem-b_fer"/>
</dbReference>
<dbReference type="InterPro" id="IPR036136">
    <property type="entry name" value="Nit/Sulf_reduc_fer-like_dom_sf"/>
</dbReference>
<dbReference type="InterPro" id="IPR006067">
    <property type="entry name" value="NO2/SO3_Rdtase_4Fe4S_dom"/>
</dbReference>
<dbReference type="InterPro" id="IPR045169">
    <property type="entry name" value="NO2/SO3_Rdtase_4Fe4S_prot"/>
</dbReference>
<dbReference type="InterPro" id="IPR045854">
    <property type="entry name" value="NO2/SO3_Rdtase_4Fe4S_sf"/>
</dbReference>
<dbReference type="InterPro" id="IPR006066">
    <property type="entry name" value="NO2/SO3_Rdtase_FeS/sirohaem_BS"/>
</dbReference>
<dbReference type="NCBIfam" id="TIGR02041">
    <property type="entry name" value="CysI"/>
    <property type="match status" value="1"/>
</dbReference>
<dbReference type="NCBIfam" id="NF010029">
    <property type="entry name" value="PRK13504.1"/>
    <property type="match status" value="1"/>
</dbReference>
<dbReference type="PANTHER" id="PTHR11493:SF47">
    <property type="entry name" value="SULFITE REDUCTASE [NADPH] SUBUNIT BETA"/>
    <property type="match status" value="1"/>
</dbReference>
<dbReference type="PANTHER" id="PTHR11493">
    <property type="entry name" value="SULFITE REDUCTASE [NADPH] SUBUNIT BETA-RELATED"/>
    <property type="match status" value="1"/>
</dbReference>
<dbReference type="Pfam" id="PF01077">
    <property type="entry name" value="NIR_SIR"/>
    <property type="match status" value="1"/>
</dbReference>
<dbReference type="Pfam" id="PF03460">
    <property type="entry name" value="NIR_SIR_ferr"/>
    <property type="match status" value="2"/>
</dbReference>
<dbReference type="PRINTS" id="PR00397">
    <property type="entry name" value="SIROHAEM"/>
</dbReference>
<dbReference type="SUPFAM" id="SSF56014">
    <property type="entry name" value="Nitrite and sulphite reductase 4Fe-4S domain-like"/>
    <property type="match status" value="2"/>
</dbReference>
<dbReference type="SUPFAM" id="SSF55124">
    <property type="entry name" value="Nitrite/Sulfite reductase N-terminal domain-like"/>
    <property type="match status" value="2"/>
</dbReference>
<dbReference type="PROSITE" id="PS00365">
    <property type="entry name" value="NIR_SIR"/>
    <property type="match status" value="1"/>
</dbReference>
<gene>
    <name evidence="1" type="primary">cysI</name>
    <name type="ordered locus">SeSA_A3101</name>
</gene>
<evidence type="ECO:0000255" key="1">
    <source>
        <dbReference type="HAMAP-Rule" id="MF_01540"/>
    </source>
</evidence>
<protein>
    <recommendedName>
        <fullName evidence="1">Sulfite reductase [NADPH] hemoprotein beta-component</fullName>
        <shortName evidence="1">SiR-HP</shortName>
        <shortName evidence="1">SiRHP</shortName>
        <ecNumber evidence="1">1.8.1.2</ecNumber>
    </recommendedName>
</protein>
<sequence>MSEKHPGPLVVEGKLSDAERMKLESNYLRGTIAEDLNDGLTGGFKGDNFLLIRFHGMYQQDDRDIRAERAAQKLEPRHAMLLRCRLPGGVITTTQWQAIDKFAADNTIYGSIRLTNRQTFQFHGILKKNVKPVHQMLHSVGLDALATANDMNRNVLCTSNPYESQLHAEAYEWAKKISEHLLPRTRAYAEIWLDQEKVATTDEEPILGQTYLPRKFKTTVVIPPQNDIDLHANDMNFVAIAENGKLVGFNLLVGGGLSIEHGNKKTYARTASEFGYLPLEHTLAVAEAVVTTQRDWGNRTDRKNAKTKYTLERVGLETFKAEVERRAGIKFEPIRPYEFTGRGDRIGWVKGIDNNWHLTLFIENGRILDYPGRPLKTGLLEIAKIHQGEFRITANQNLIIASVPESQKVKIETLARDHGLMNAVSAQRENSMACVSFPTCPLAMAEAERFLPSFTDKVEAILEKHGIPDEHIVMRVTGCPNGCGRAMLAEIGLVGKAPGRYNLHLGGNRIGTRIPRMYKENITESDILASLDELVGRWAKEREAGEGFGDFTVRAGIIRPVLDPARDFWE</sequence>
<accession>B4TTX8</accession>
<reference key="1">
    <citation type="journal article" date="2011" name="J. Bacteriol.">
        <title>Comparative genomics of 28 Salmonella enterica isolates: evidence for CRISPR-mediated adaptive sublineage evolution.</title>
        <authorList>
            <person name="Fricke W.F."/>
            <person name="Mammel M.K."/>
            <person name="McDermott P.F."/>
            <person name="Tartera C."/>
            <person name="White D.G."/>
            <person name="Leclerc J.E."/>
            <person name="Ravel J."/>
            <person name="Cebula T.A."/>
        </authorList>
    </citation>
    <scope>NUCLEOTIDE SEQUENCE [LARGE SCALE GENOMIC DNA]</scope>
    <source>
        <strain>CVM19633</strain>
    </source>
</reference>
<comment type="function">
    <text evidence="1">Component of the sulfite reductase complex that catalyzes the 6-electron reduction of sulfite to sulfide. This is one of several activities required for the biosynthesis of L-cysteine from sulfate.</text>
</comment>
<comment type="catalytic activity">
    <reaction evidence="1">
        <text>hydrogen sulfide + 3 NADP(+) + 3 H2O = sulfite + 3 NADPH + 4 H(+)</text>
        <dbReference type="Rhea" id="RHEA:13801"/>
        <dbReference type="ChEBI" id="CHEBI:15377"/>
        <dbReference type="ChEBI" id="CHEBI:15378"/>
        <dbReference type="ChEBI" id="CHEBI:17359"/>
        <dbReference type="ChEBI" id="CHEBI:29919"/>
        <dbReference type="ChEBI" id="CHEBI:57783"/>
        <dbReference type="ChEBI" id="CHEBI:58349"/>
        <dbReference type="EC" id="1.8.1.2"/>
    </reaction>
</comment>
<comment type="cofactor">
    <cofactor evidence="1">
        <name>siroheme</name>
        <dbReference type="ChEBI" id="CHEBI:60052"/>
    </cofactor>
    <text evidence="1">Binds 1 siroheme per subunit.</text>
</comment>
<comment type="cofactor">
    <cofactor evidence="1">
        <name>[4Fe-4S] cluster</name>
        <dbReference type="ChEBI" id="CHEBI:49883"/>
    </cofactor>
    <text evidence="1">Binds 1 [4Fe-4S] cluster per subunit.</text>
</comment>
<comment type="pathway">
    <text evidence="1">Sulfur metabolism; hydrogen sulfide biosynthesis; hydrogen sulfide from sulfite (NADPH route): step 1/1.</text>
</comment>
<comment type="subunit">
    <text evidence="1">Alpha(8)-beta(8). The alpha component is a flavoprotein, the beta component is a hemoprotein.</text>
</comment>
<comment type="similarity">
    <text evidence="1">Belongs to the nitrite and sulfite reductase 4Fe-4S domain family.</text>
</comment>
<name>CYSI_SALSV</name>
<proteinExistence type="inferred from homology"/>
<organism>
    <name type="scientific">Salmonella schwarzengrund (strain CVM19633)</name>
    <dbReference type="NCBI Taxonomy" id="439843"/>
    <lineage>
        <taxon>Bacteria</taxon>
        <taxon>Pseudomonadati</taxon>
        <taxon>Pseudomonadota</taxon>
        <taxon>Gammaproteobacteria</taxon>
        <taxon>Enterobacterales</taxon>
        <taxon>Enterobacteriaceae</taxon>
        <taxon>Salmonella</taxon>
    </lineage>
</organism>
<feature type="chain" id="PRO_1000146660" description="Sulfite reductase [NADPH] hemoprotein beta-component">
    <location>
        <begin position="1"/>
        <end position="570"/>
    </location>
</feature>
<feature type="binding site" evidence="1">
    <location>
        <position position="434"/>
    </location>
    <ligand>
        <name>[4Fe-4S] cluster</name>
        <dbReference type="ChEBI" id="CHEBI:49883"/>
    </ligand>
</feature>
<feature type="binding site" evidence="1">
    <location>
        <position position="440"/>
    </location>
    <ligand>
        <name>[4Fe-4S] cluster</name>
        <dbReference type="ChEBI" id="CHEBI:49883"/>
    </ligand>
</feature>
<feature type="binding site" evidence="1">
    <location>
        <position position="479"/>
    </location>
    <ligand>
        <name>[4Fe-4S] cluster</name>
        <dbReference type="ChEBI" id="CHEBI:49883"/>
    </ligand>
</feature>
<feature type="binding site" evidence="1">
    <location>
        <position position="483"/>
    </location>
    <ligand>
        <name>[4Fe-4S] cluster</name>
        <dbReference type="ChEBI" id="CHEBI:49883"/>
    </ligand>
</feature>
<feature type="binding site" description="axial binding residue" evidence="1">
    <location>
        <position position="483"/>
    </location>
    <ligand>
        <name>siroheme</name>
        <dbReference type="ChEBI" id="CHEBI:60052"/>
    </ligand>
    <ligandPart>
        <name>Fe</name>
        <dbReference type="ChEBI" id="CHEBI:18248"/>
    </ligandPart>
</feature>